<protein>
    <recommendedName>
        <fullName evidence="3">Carbamoyl phosphate synthase arginine-specific small chain</fullName>
        <ecNumber evidence="1">6.3.5.5</ecNumber>
    </recommendedName>
    <alternativeName>
        <fullName evidence="1">Carbamoyl phosphate synthetase glutamine chain</fullName>
    </alternativeName>
</protein>
<evidence type="ECO:0000255" key="1">
    <source>
        <dbReference type="HAMAP-Rule" id="MF_01209"/>
    </source>
</evidence>
<evidence type="ECO:0000269" key="2">
    <source>
    </source>
</evidence>
<evidence type="ECO:0000305" key="3"/>
<comment type="function">
    <text evidence="2">Small subunit of the glutamine-dependent carbamoyl phosphate synthetase (CPSase). CPSase catalyzes the formation of carbamoyl phosphate from the ammonia moiety of glutamine, carbonate, and phosphate donated by ATP, constituting the first step of the biosynthetic pathway leading to arginine and/or urea. The small subunit (glutamine amidotransferase) binds and cleaves glutamine to supply the large subunit with the substrate ammonia.</text>
</comment>
<comment type="catalytic activity">
    <reaction evidence="1 2">
        <text>hydrogencarbonate + L-glutamine + 2 ATP + H2O = carbamoyl phosphate + L-glutamate + 2 ADP + phosphate + 2 H(+)</text>
        <dbReference type="Rhea" id="RHEA:18633"/>
        <dbReference type="ChEBI" id="CHEBI:15377"/>
        <dbReference type="ChEBI" id="CHEBI:15378"/>
        <dbReference type="ChEBI" id="CHEBI:17544"/>
        <dbReference type="ChEBI" id="CHEBI:29985"/>
        <dbReference type="ChEBI" id="CHEBI:30616"/>
        <dbReference type="ChEBI" id="CHEBI:43474"/>
        <dbReference type="ChEBI" id="CHEBI:58228"/>
        <dbReference type="ChEBI" id="CHEBI:58359"/>
        <dbReference type="ChEBI" id="CHEBI:456216"/>
        <dbReference type="EC" id="6.3.5.5"/>
    </reaction>
</comment>
<comment type="catalytic activity">
    <molecule>Carbamoyl phosphate synthase arginine-specific small chain</molecule>
    <reaction evidence="1">
        <text>L-glutamine + H2O = L-glutamate + NH4(+)</text>
        <dbReference type="Rhea" id="RHEA:15889"/>
        <dbReference type="ChEBI" id="CHEBI:15377"/>
        <dbReference type="ChEBI" id="CHEBI:28938"/>
        <dbReference type="ChEBI" id="CHEBI:29985"/>
        <dbReference type="ChEBI" id="CHEBI:58359"/>
    </reaction>
</comment>
<comment type="biophysicochemical properties">
    <temperatureDependence>
        <text evidence="2">Thermostable up to 63 degrees Celsius.</text>
    </temperatureDependence>
</comment>
<comment type="pathway">
    <text evidence="1">Amino-acid biosynthesis; L-arginine biosynthesis; carbamoyl phosphate from bicarbonate: step 1/1.</text>
</comment>
<comment type="subunit">
    <text evidence="1">Composed of two chains; the small (or glutamine) chain promotes the hydrolysis of glutamine to ammonia, which is used by the large (or ammonia) chain to synthesize carbamoyl phosphate. Tetramer of heterodimers (alpha,beta)4.</text>
</comment>
<comment type="similarity">
    <text evidence="1">Belongs to the CarA family.</text>
</comment>
<organism>
    <name type="scientific">Geobacillus stearothermophilus</name>
    <name type="common">Bacillus stearothermophilus</name>
    <dbReference type="NCBI Taxonomy" id="1422"/>
    <lineage>
        <taxon>Bacteria</taxon>
        <taxon>Bacillati</taxon>
        <taxon>Bacillota</taxon>
        <taxon>Bacilli</taxon>
        <taxon>Bacillales</taxon>
        <taxon>Anoxybacillaceae</taxon>
        <taxon>Geobacillus</taxon>
    </lineage>
</organism>
<name>CARX_GEOSE</name>
<feature type="chain" id="PRO_0000112254" description="Carbamoyl phosphate synthase arginine-specific small chain">
    <location>
        <begin position="1"/>
        <end position="354"/>
    </location>
</feature>
<feature type="domain" description="Glutamine amidotransferase type-1" evidence="1">
    <location>
        <begin position="165"/>
        <end position="352"/>
    </location>
</feature>
<feature type="region of interest" description="CPSase" evidence="1">
    <location>
        <begin position="1"/>
        <end position="163"/>
    </location>
</feature>
<feature type="active site" description="Nucleophile" evidence="1">
    <location>
        <position position="240"/>
    </location>
</feature>
<feature type="active site" evidence="1">
    <location>
        <position position="325"/>
    </location>
</feature>
<feature type="active site" evidence="1">
    <location>
        <position position="327"/>
    </location>
</feature>
<feature type="binding site" evidence="1">
    <location>
        <position position="46"/>
    </location>
    <ligand>
        <name>L-glutamine</name>
        <dbReference type="ChEBI" id="CHEBI:58359"/>
    </ligand>
</feature>
<feature type="binding site" evidence="1">
    <location>
        <position position="213"/>
    </location>
    <ligand>
        <name>L-glutamine</name>
        <dbReference type="ChEBI" id="CHEBI:58359"/>
    </ligand>
</feature>
<feature type="binding site" evidence="1">
    <location>
        <position position="215"/>
    </location>
    <ligand>
        <name>L-glutamine</name>
        <dbReference type="ChEBI" id="CHEBI:58359"/>
    </ligand>
</feature>
<feature type="binding site" evidence="1">
    <location>
        <position position="241"/>
    </location>
    <ligand>
        <name>L-glutamine</name>
        <dbReference type="ChEBI" id="CHEBI:58359"/>
    </ligand>
</feature>
<feature type="binding site" evidence="1">
    <location>
        <position position="244"/>
    </location>
    <ligand>
        <name>L-glutamine</name>
        <dbReference type="ChEBI" id="CHEBI:58359"/>
    </ligand>
</feature>
<feature type="binding site" evidence="1">
    <location>
        <position position="282"/>
    </location>
    <ligand>
        <name>L-glutamine</name>
        <dbReference type="ChEBI" id="CHEBI:58359"/>
    </ligand>
</feature>
<feature type="binding site" evidence="1">
    <location>
        <position position="285"/>
    </location>
    <ligand>
        <name>L-glutamine</name>
        <dbReference type="ChEBI" id="CHEBI:58359"/>
    </ligand>
</feature>
<keyword id="KW-0028">Amino-acid biosynthesis</keyword>
<keyword id="KW-0055">Arginine biosynthesis</keyword>
<keyword id="KW-0067">ATP-binding</keyword>
<keyword id="KW-0315">Glutamine amidotransferase</keyword>
<keyword id="KW-0436">Ligase</keyword>
<keyword id="KW-0547">Nucleotide-binding</keyword>
<reference key="1">
    <citation type="journal article" date="1997" name="Eur. J. Biochem.">
        <title>Cloning and characterization of the arginine-specific carbamoyl-phosphate synthetase from Bacillus stearothermophilus.</title>
        <authorList>
            <person name="Yang H."/>
            <person name="Park S.M."/>
            <person name="Nolan W.G."/>
            <person name="Lu C.-D."/>
            <person name="Abdelal A.T."/>
        </authorList>
    </citation>
    <scope>NUCLEOTIDE SEQUENCE [GENOMIC DNA]</scope>
    <scope>FUNCTION</scope>
    <scope>CATALYTIC ACTIVITY</scope>
    <scope>BIOPHYSICOCHEMICAL PROPERTIES</scope>
    <source>
        <strain>ATCC 12980 / DSM 22 / CCM 2062 / JCM 2501 / NBRC 12550 / NCIMB 8923 / NCTC 10339 / R-35646 / VKM B-510</strain>
    </source>
</reference>
<sequence length="354" mass="39171">MKAYLHVASGKTFSGELAAPLEEKVSGEIVFFTGMTGYQEVLTDPSYKNQIIVFTYPLIGNYGINENDFESKRPHVEAVVVYEASREGFHYGAKYSLAEYLQHWNIPLLTHVDTRALVKEIRTAGTMMAELSLSPISAVGGVEAVFPVRAVSTRTIETYGEGGPHLVLVDFGYKKSILQSLLARGCRVTVVPHDTAPEAIDALKPDGLVLSNGPGDPKQLRHQLPAIRQLIDRYPTLAICLGHQLVALATGRIRKKLRFGHRGANQPVWDAVKQNVMMTSQNHSYVVKEGSLVGKPFDIRFINVNDGSVEGIVHRHKPILSVQYHPEAHPGPHDTGYIFDEFLQTVFKGENVYA</sequence>
<dbReference type="EC" id="6.3.5.5" evidence="1"/>
<dbReference type="EMBL" id="U43091">
    <property type="protein sequence ID" value="AAC78717.1"/>
    <property type="molecule type" value="Genomic_DNA"/>
</dbReference>
<dbReference type="SMR" id="P54324"/>
<dbReference type="MEROPS" id="C26.963"/>
<dbReference type="SABIO-RK" id="P54324"/>
<dbReference type="UniPathway" id="UPA00068">
    <property type="reaction ID" value="UER00171"/>
</dbReference>
<dbReference type="GO" id="GO:0005524">
    <property type="term" value="F:ATP binding"/>
    <property type="evidence" value="ECO:0007669"/>
    <property type="project" value="UniProtKB-UniRule"/>
</dbReference>
<dbReference type="GO" id="GO:0004088">
    <property type="term" value="F:carbamoyl-phosphate synthase (glutamine-hydrolyzing) activity"/>
    <property type="evidence" value="ECO:0007669"/>
    <property type="project" value="UniProtKB-UniRule"/>
</dbReference>
<dbReference type="GO" id="GO:0004359">
    <property type="term" value="F:glutaminase activity"/>
    <property type="evidence" value="ECO:0007669"/>
    <property type="project" value="RHEA"/>
</dbReference>
<dbReference type="GO" id="GO:0006207">
    <property type="term" value="P:'de novo' pyrimidine nucleobase biosynthetic process"/>
    <property type="evidence" value="ECO:0007669"/>
    <property type="project" value="InterPro"/>
</dbReference>
<dbReference type="GO" id="GO:0044205">
    <property type="term" value="P:'de novo' UMP biosynthetic process"/>
    <property type="evidence" value="ECO:0007669"/>
    <property type="project" value="UniProtKB-UniRule"/>
</dbReference>
<dbReference type="GO" id="GO:0006541">
    <property type="term" value="P:glutamine metabolic process"/>
    <property type="evidence" value="ECO:0007669"/>
    <property type="project" value="InterPro"/>
</dbReference>
<dbReference type="GO" id="GO:0006526">
    <property type="term" value="P:L-arginine biosynthetic process"/>
    <property type="evidence" value="ECO:0007669"/>
    <property type="project" value="UniProtKB-UniRule"/>
</dbReference>
<dbReference type="CDD" id="cd01744">
    <property type="entry name" value="GATase1_CPSase"/>
    <property type="match status" value="1"/>
</dbReference>
<dbReference type="Gene3D" id="3.40.50.880">
    <property type="match status" value="1"/>
</dbReference>
<dbReference type="Gene3D" id="3.50.30.20">
    <property type="entry name" value="Carbamoyl-phosphate synthase small subunit, N-terminal domain"/>
    <property type="match status" value="1"/>
</dbReference>
<dbReference type="HAMAP" id="MF_01209">
    <property type="entry name" value="CPSase_S_chain"/>
    <property type="match status" value="1"/>
</dbReference>
<dbReference type="InterPro" id="IPR050472">
    <property type="entry name" value="Anth_synth/Amidotransfase"/>
</dbReference>
<dbReference type="InterPro" id="IPR006274">
    <property type="entry name" value="CarbamoylP_synth_ssu"/>
</dbReference>
<dbReference type="InterPro" id="IPR002474">
    <property type="entry name" value="CarbamoylP_synth_ssu_N"/>
</dbReference>
<dbReference type="InterPro" id="IPR036480">
    <property type="entry name" value="CarbP_synth_ssu_N_sf"/>
</dbReference>
<dbReference type="InterPro" id="IPR029062">
    <property type="entry name" value="Class_I_gatase-like"/>
</dbReference>
<dbReference type="InterPro" id="IPR035686">
    <property type="entry name" value="CPSase_GATase1"/>
</dbReference>
<dbReference type="InterPro" id="IPR017926">
    <property type="entry name" value="GATASE"/>
</dbReference>
<dbReference type="NCBIfam" id="TIGR01368">
    <property type="entry name" value="CPSaseIIsmall"/>
    <property type="match status" value="1"/>
</dbReference>
<dbReference type="NCBIfam" id="NF009475">
    <property type="entry name" value="PRK12838.1"/>
    <property type="match status" value="1"/>
</dbReference>
<dbReference type="PANTHER" id="PTHR43418:SF7">
    <property type="entry name" value="CARBAMOYL-PHOSPHATE SYNTHASE SMALL CHAIN"/>
    <property type="match status" value="1"/>
</dbReference>
<dbReference type="PANTHER" id="PTHR43418">
    <property type="entry name" value="MULTIFUNCTIONAL TRYPTOPHAN BIOSYNTHESIS PROTEIN-RELATED"/>
    <property type="match status" value="1"/>
</dbReference>
<dbReference type="Pfam" id="PF00988">
    <property type="entry name" value="CPSase_sm_chain"/>
    <property type="match status" value="1"/>
</dbReference>
<dbReference type="Pfam" id="PF00117">
    <property type="entry name" value="GATase"/>
    <property type="match status" value="1"/>
</dbReference>
<dbReference type="PRINTS" id="PR00097">
    <property type="entry name" value="ANTSNTHASEII"/>
</dbReference>
<dbReference type="PRINTS" id="PR00099">
    <property type="entry name" value="CPSGATASE"/>
</dbReference>
<dbReference type="PRINTS" id="PR00096">
    <property type="entry name" value="GATASE"/>
</dbReference>
<dbReference type="SMART" id="SM01097">
    <property type="entry name" value="CPSase_sm_chain"/>
    <property type="match status" value="1"/>
</dbReference>
<dbReference type="SUPFAM" id="SSF52021">
    <property type="entry name" value="Carbamoyl phosphate synthetase, small subunit N-terminal domain"/>
    <property type="match status" value="1"/>
</dbReference>
<dbReference type="SUPFAM" id="SSF52317">
    <property type="entry name" value="Class I glutamine amidotransferase-like"/>
    <property type="match status" value="1"/>
</dbReference>
<dbReference type="PROSITE" id="PS51273">
    <property type="entry name" value="GATASE_TYPE_1"/>
    <property type="match status" value="1"/>
</dbReference>
<gene>
    <name evidence="1" type="primary">carA</name>
</gene>
<accession>P54324</accession>
<proteinExistence type="evidence at protein level"/>